<gene>
    <name evidence="1" type="primary">pheS</name>
    <name type="ordered locus">Npun_R0940</name>
</gene>
<dbReference type="EC" id="6.1.1.20" evidence="1"/>
<dbReference type="EMBL" id="CP001037">
    <property type="protein sequence ID" value="ACC79672.1"/>
    <property type="molecule type" value="Genomic_DNA"/>
</dbReference>
<dbReference type="RefSeq" id="WP_012407694.1">
    <property type="nucleotide sequence ID" value="NC_010628.1"/>
</dbReference>
<dbReference type="SMR" id="B2IUA1"/>
<dbReference type="STRING" id="63737.Npun_R0940"/>
<dbReference type="EnsemblBacteria" id="ACC79672">
    <property type="protein sequence ID" value="ACC79672"/>
    <property type="gene ID" value="Npun_R0940"/>
</dbReference>
<dbReference type="KEGG" id="npu:Npun_R0940"/>
<dbReference type="eggNOG" id="COG0016">
    <property type="taxonomic scope" value="Bacteria"/>
</dbReference>
<dbReference type="HOGENOM" id="CLU_025086_0_1_3"/>
<dbReference type="OrthoDB" id="9800719at2"/>
<dbReference type="PhylomeDB" id="B2IUA1"/>
<dbReference type="Proteomes" id="UP000001191">
    <property type="component" value="Chromosome"/>
</dbReference>
<dbReference type="GO" id="GO:0005737">
    <property type="term" value="C:cytoplasm"/>
    <property type="evidence" value="ECO:0007669"/>
    <property type="project" value="UniProtKB-SubCell"/>
</dbReference>
<dbReference type="GO" id="GO:0005524">
    <property type="term" value="F:ATP binding"/>
    <property type="evidence" value="ECO:0007669"/>
    <property type="project" value="UniProtKB-UniRule"/>
</dbReference>
<dbReference type="GO" id="GO:0000287">
    <property type="term" value="F:magnesium ion binding"/>
    <property type="evidence" value="ECO:0007669"/>
    <property type="project" value="UniProtKB-UniRule"/>
</dbReference>
<dbReference type="GO" id="GO:0004826">
    <property type="term" value="F:phenylalanine-tRNA ligase activity"/>
    <property type="evidence" value="ECO:0007669"/>
    <property type="project" value="UniProtKB-UniRule"/>
</dbReference>
<dbReference type="GO" id="GO:0000049">
    <property type="term" value="F:tRNA binding"/>
    <property type="evidence" value="ECO:0007669"/>
    <property type="project" value="InterPro"/>
</dbReference>
<dbReference type="GO" id="GO:0006432">
    <property type="term" value="P:phenylalanyl-tRNA aminoacylation"/>
    <property type="evidence" value="ECO:0007669"/>
    <property type="project" value="UniProtKB-UniRule"/>
</dbReference>
<dbReference type="CDD" id="cd00496">
    <property type="entry name" value="PheRS_alpha_core"/>
    <property type="match status" value="1"/>
</dbReference>
<dbReference type="FunFam" id="3.30.930.10:FF:000003">
    <property type="entry name" value="Phenylalanine--tRNA ligase alpha subunit"/>
    <property type="match status" value="1"/>
</dbReference>
<dbReference type="Gene3D" id="3.30.930.10">
    <property type="entry name" value="Bira Bifunctional Protein, Domain 2"/>
    <property type="match status" value="1"/>
</dbReference>
<dbReference type="HAMAP" id="MF_00281">
    <property type="entry name" value="Phe_tRNA_synth_alpha1"/>
    <property type="match status" value="1"/>
</dbReference>
<dbReference type="InterPro" id="IPR006195">
    <property type="entry name" value="aa-tRNA-synth_II"/>
</dbReference>
<dbReference type="InterPro" id="IPR045864">
    <property type="entry name" value="aa-tRNA-synth_II/BPL/LPL"/>
</dbReference>
<dbReference type="InterPro" id="IPR004529">
    <property type="entry name" value="Phe-tRNA-synth_IIc_asu"/>
</dbReference>
<dbReference type="InterPro" id="IPR004188">
    <property type="entry name" value="Phe-tRNA_ligase_II_N"/>
</dbReference>
<dbReference type="InterPro" id="IPR022911">
    <property type="entry name" value="Phe_tRNA_ligase_alpha1_bac"/>
</dbReference>
<dbReference type="InterPro" id="IPR002319">
    <property type="entry name" value="Phenylalanyl-tRNA_Synthase"/>
</dbReference>
<dbReference type="InterPro" id="IPR010978">
    <property type="entry name" value="tRNA-bd_arm"/>
</dbReference>
<dbReference type="NCBIfam" id="TIGR00468">
    <property type="entry name" value="pheS"/>
    <property type="match status" value="1"/>
</dbReference>
<dbReference type="PANTHER" id="PTHR11538:SF41">
    <property type="entry name" value="PHENYLALANINE--TRNA LIGASE, MITOCHONDRIAL"/>
    <property type="match status" value="1"/>
</dbReference>
<dbReference type="PANTHER" id="PTHR11538">
    <property type="entry name" value="PHENYLALANYL-TRNA SYNTHETASE"/>
    <property type="match status" value="1"/>
</dbReference>
<dbReference type="Pfam" id="PF02912">
    <property type="entry name" value="Phe_tRNA-synt_N"/>
    <property type="match status" value="1"/>
</dbReference>
<dbReference type="Pfam" id="PF01409">
    <property type="entry name" value="tRNA-synt_2d"/>
    <property type="match status" value="1"/>
</dbReference>
<dbReference type="SUPFAM" id="SSF55681">
    <property type="entry name" value="Class II aaRS and biotin synthetases"/>
    <property type="match status" value="1"/>
</dbReference>
<dbReference type="SUPFAM" id="SSF46589">
    <property type="entry name" value="tRNA-binding arm"/>
    <property type="match status" value="1"/>
</dbReference>
<dbReference type="PROSITE" id="PS50862">
    <property type="entry name" value="AA_TRNA_LIGASE_II"/>
    <property type="match status" value="1"/>
</dbReference>
<proteinExistence type="inferred from homology"/>
<evidence type="ECO:0000255" key="1">
    <source>
        <dbReference type="HAMAP-Rule" id="MF_00281"/>
    </source>
</evidence>
<sequence>MTSNLEAQLLALRQEGEKAIAAADTLERLEELRVNYLGKKGELGALLRSMGQMSAEERPKIGAIANTVKESLQTSLDQQRVALEAAQIQVQLEAETLDVTMPGIYSPQGRIHPLNGIIDRALDIFVGMGYTVAQGPEMETDYYNFEALNTPPDHPARDMQDTFYLPDGNLLRTHTSSVQIRYMEREEPPIRVVAPGRVYRRDNVDATHSAVFHQIELLAIDEGLTFTDLKGTIKVFLQAIFGDLPIRFRASYFPFTEPSAEVDLQWNGRWLEVMGCGMVDPNVLKSVGYDPEVYTGFAAGFGVERFAMVLHQIDDIRRLYASDLRFLQQF</sequence>
<comment type="catalytic activity">
    <reaction evidence="1">
        <text>tRNA(Phe) + L-phenylalanine + ATP = L-phenylalanyl-tRNA(Phe) + AMP + diphosphate + H(+)</text>
        <dbReference type="Rhea" id="RHEA:19413"/>
        <dbReference type="Rhea" id="RHEA-COMP:9668"/>
        <dbReference type="Rhea" id="RHEA-COMP:9699"/>
        <dbReference type="ChEBI" id="CHEBI:15378"/>
        <dbReference type="ChEBI" id="CHEBI:30616"/>
        <dbReference type="ChEBI" id="CHEBI:33019"/>
        <dbReference type="ChEBI" id="CHEBI:58095"/>
        <dbReference type="ChEBI" id="CHEBI:78442"/>
        <dbReference type="ChEBI" id="CHEBI:78531"/>
        <dbReference type="ChEBI" id="CHEBI:456215"/>
        <dbReference type="EC" id="6.1.1.20"/>
    </reaction>
</comment>
<comment type="cofactor">
    <cofactor evidence="1">
        <name>Mg(2+)</name>
        <dbReference type="ChEBI" id="CHEBI:18420"/>
    </cofactor>
    <text evidence="1">Binds 2 magnesium ions per tetramer.</text>
</comment>
<comment type="subunit">
    <text evidence="1">Tetramer of two alpha and two beta subunits.</text>
</comment>
<comment type="subcellular location">
    <subcellularLocation>
        <location evidence="1">Cytoplasm</location>
    </subcellularLocation>
</comment>
<comment type="similarity">
    <text evidence="1">Belongs to the class-II aminoacyl-tRNA synthetase family. Phe-tRNA synthetase alpha subunit type 1 subfamily.</text>
</comment>
<accession>B2IUA1</accession>
<name>SYFA_NOSP7</name>
<keyword id="KW-0030">Aminoacyl-tRNA synthetase</keyword>
<keyword id="KW-0067">ATP-binding</keyword>
<keyword id="KW-0963">Cytoplasm</keyword>
<keyword id="KW-0436">Ligase</keyword>
<keyword id="KW-0460">Magnesium</keyword>
<keyword id="KW-0479">Metal-binding</keyword>
<keyword id="KW-0547">Nucleotide-binding</keyword>
<keyword id="KW-0648">Protein biosynthesis</keyword>
<keyword id="KW-1185">Reference proteome</keyword>
<organism>
    <name type="scientific">Nostoc punctiforme (strain ATCC 29133 / PCC 73102)</name>
    <dbReference type="NCBI Taxonomy" id="63737"/>
    <lineage>
        <taxon>Bacteria</taxon>
        <taxon>Bacillati</taxon>
        <taxon>Cyanobacteriota</taxon>
        <taxon>Cyanophyceae</taxon>
        <taxon>Nostocales</taxon>
        <taxon>Nostocaceae</taxon>
        <taxon>Nostoc</taxon>
    </lineage>
</organism>
<reference key="1">
    <citation type="journal article" date="2013" name="Plant Physiol.">
        <title>A Nostoc punctiforme Sugar Transporter Necessary to Establish a Cyanobacterium-Plant Symbiosis.</title>
        <authorList>
            <person name="Ekman M."/>
            <person name="Picossi S."/>
            <person name="Campbell E.L."/>
            <person name="Meeks J.C."/>
            <person name="Flores E."/>
        </authorList>
    </citation>
    <scope>NUCLEOTIDE SEQUENCE [LARGE SCALE GENOMIC DNA]</scope>
    <source>
        <strain>ATCC 29133 / PCC 73102</strain>
    </source>
</reference>
<protein>
    <recommendedName>
        <fullName evidence="1">Phenylalanine--tRNA ligase alpha subunit</fullName>
        <ecNumber evidence="1">6.1.1.20</ecNumber>
    </recommendedName>
    <alternativeName>
        <fullName evidence="1">Phenylalanyl-tRNA synthetase alpha subunit</fullName>
        <shortName evidence="1">PheRS</shortName>
    </alternativeName>
</protein>
<feature type="chain" id="PRO_1000114894" description="Phenylalanine--tRNA ligase alpha subunit">
    <location>
        <begin position="1"/>
        <end position="330"/>
    </location>
</feature>
<feature type="binding site" evidence="1">
    <location>
        <position position="257"/>
    </location>
    <ligand>
        <name>Mg(2+)</name>
        <dbReference type="ChEBI" id="CHEBI:18420"/>
        <note>shared with beta subunit</note>
    </ligand>
</feature>